<proteinExistence type="inferred from homology"/>
<evidence type="ECO:0000255" key="1">
    <source>
        <dbReference type="HAMAP-Rule" id="MF_00713"/>
    </source>
</evidence>
<accession>B6YT12</accession>
<organism>
    <name type="scientific">Thermococcus onnurineus (strain NA1)</name>
    <dbReference type="NCBI Taxonomy" id="523850"/>
    <lineage>
        <taxon>Archaea</taxon>
        <taxon>Methanobacteriati</taxon>
        <taxon>Methanobacteriota</taxon>
        <taxon>Thermococci</taxon>
        <taxon>Thermococcales</taxon>
        <taxon>Thermococcaceae</taxon>
        <taxon>Thermococcus</taxon>
    </lineage>
</organism>
<gene>
    <name evidence="1" type="primary">gcvPB</name>
    <name type="ordered locus">TON_0214</name>
</gene>
<name>GCSPB_THEON</name>
<comment type="function">
    <text evidence="1">The glycine cleavage system catalyzes the degradation of glycine. The P protein binds the alpha-amino group of glycine through its pyridoxal phosphate cofactor; CO(2) is released and the remaining methylamine moiety is then transferred to the lipoamide cofactor of the H protein.</text>
</comment>
<comment type="catalytic activity">
    <reaction evidence="1">
        <text>N(6)-[(R)-lipoyl]-L-lysyl-[glycine-cleavage complex H protein] + glycine + H(+) = N(6)-[(R)-S(8)-aminomethyldihydrolipoyl]-L-lysyl-[glycine-cleavage complex H protein] + CO2</text>
        <dbReference type="Rhea" id="RHEA:24304"/>
        <dbReference type="Rhea" id="RHEA-COMP:10494"/>
        <dbReference type="Rhea" id="RHEA-COMP:10495"/>
        <dbReference type="ChEBI" id="CHEBI:15378"/>
        <dbReference type="ChEBI" id="CHEBI:16526"/>
        <dbReference type="ChEBI" id="CHEBI:57305"/>
        <dbReference type="ChEBI" id="CHEBI:83099"/>
        <dbReference type="ChEBI" id="CHEBI:83143"/>
        <dbReference type="EC" id="1.4.4.2"/>
    </reaction>
</comment>
<comment type="cofactor">
    <cofactor evidence="1">
        <name>pyridoxal 5'-phosphate</name>
        <dbReference type="ChEBI" id="CHEBI:597326"/>
    </cofactor>
</comment>
<comment type="subunit">
    <text evidence="1">The glycine cleavage system is composed of four proteins: P, T, L and H. In this organism, the P 'protein' is a heterodimer of two subunits.</text>
</comment>
<comment type="similarity">
    <text evidence="1">Belongs to the GcvP family. C-terminal subunit subfamily.</text>
</comment>
<feature type="chain" id="PRO_1000132506" description="Probable glycine dehydrogenase (decarboxylating) subunit 2">
    <location>
        <begin position="1"/>
        <end position="502"/>
    </location>
</feature>
<feature type="modified residue" description="N6-(pyridoxal phosphate)lysine" evidence="1">
    <location>
        <position position="273"/>
    </location>
</feature>
<keyword id="KW-0560">Oxidoreductase</keyword>
<keyword id="KW-0663">Pyridoxal phosphate</keyword>
<reference key="1">
    <citation type="journal article" date="2008" name="J. Bacteriol.">
        <title>The complete genome sequence of Thermococcus onnurineus NA1 reveals a mixed heterotrophic and carboxydotrophic metabolism.</title>
        <authorList>
            <person name="Lee H.S."/>
            <person name="Kang S.G."/>
            <person name="Bae S.S."/>
            <person name="Lim J.K."/>
            <person name="Cho Y."/>
            <person name="Kim Y.J."/>
            <person name="Jeon J.H."/>
            <person name="Cha S.-S."/>
            <person name="Kwon K.K."/>
            <person name="Kim H.-T."/>
            <person name="Park C.-J."/>
            <person name="Lee H.-W."/>
            <person name="Kim S.I."/>
            <person name="Chun J."/>
            <person name="Colwell R.R."/>
            <person name="Kim S.-J."/>
            <person name="Lee J.-H."/>
        </authorList>
    </citation>
    <scope>NUCLEOTIDE SEQUENCE [LARGE SCALE GENOMIC DNA]</scope>
    <source>
        <strain>NA1</strain>
    </source>
</reference>
<dbReference type="EC" id="1.4.4.2" evidence="1"/>
<dbReference type="EMBL" id="CP000855">
    <property type="protein sequence ID" value="ACJ15699.1"/>
    <property type="molecule type" value="Genomic_DNA"/>
</dbReference>
<dbReference type="RefSeq" id="WP_012571172.1">
    <property type="nucleotide sequence ID" value="NC_011529.1"/>
</dbReference>
<dbReference type="SMR" id="B6YT12"/>
<dbReference type="STRING" id="523850.TON_0214"/>
<dbReference type="GeneID" id="7017871"/>
<dbReference type="KEGG" id="ton:TON_0214"/>
<dbReference type="PATRIC" id="fig|523850.10.peg.216"/>
<dbReference type="eggNOG" id="arCOG00076">
    <property type="taxonomic scope" value="Archaea"/>
</dbReference>
<dbReference type="HOGENOM" id="CLU_004620_5_0_2"/>
<dbReference type="OrthoDB" id="371967at2157"/>
<dbReference type="Proteomes" id="UP000002727">
    <property type="component" value="Chromosome"/>
</dbReference>
<dbReference type="GO" id="GO:0005829">
    <property type="term" value="C:cytosol"/>
    <property type="evidence" value="ECO:0007669"/>
    <property type="project" value="TreeGrafter"/>
</dbReference>
<dbReference type="GO" id="GO:0005960">
    <property type="term" value="C:glycine cleavage complex"/>
    <property type="evidence" value="ECO:0007669"/>
    <property type="project" value="TreeGrafter"/>
</dbReference>
<dbReference type="GO" id="GO:0016594">
    <property type="term" value="F:glycine binding"/>
    <property type="evidence" value="ECO:0007669"/>
    <property type="project" value="TreeGrafter"/>
</dbReference>
<dbReference type="GO" id="GO:0004375">
    <property type="term" value="F:glycine dehydrogenase (decarboxylating) activity"/>
    <property type="evidence" value="ECO:0007669"/>
    <property type="project" value="UniProtKB-EC"/>
</dbReference>
<dbReference type="GO" id="GO:0030170">
    <property type="term" value="F:pyridoxal phosphate binding"/>
    <property type="evidence" value="ECO:0007669"/>
    <property type="project" value="TreeGrafter"/>
</dbReference>
<dbReference type="GO" id="GO:0019464">
    <property type="term" value="P:glycine decarboxylation via glycine cleavage system"/>
    <property type="evidence" value="ECO:0007669"/>
    <property type="project" value="UniProtKB-UniRule"/>
</dbReference>
<dbReference type="CDD" id="cd00613">
    <property type="entry name" value="GDC-P"/>
    <property type="match status" value="1"/>
</dbReference>
<dbReference type="FunFam" id="3.40.640.10:FF:000034">
    <property type="entry name" value="Probable glycine dehydrogenase (decarboxylating) subunit 2"/>
    <property type="match status" value="1"/>
</dbReference>
<dbReference type="FunFam" id="3.90.1150.10:FF:000014">
    <property type="entry name" value="Probable glycine dehydrogenase (decarboxylating) subunit 2"/>
    <property type="match status" value="1"/>
</dbReference>
<dbReference type="Gene3D" id="6.20.440.10">
    <property type="match status" value="1"/>
</dbReference>
<dbReference type="Gene3D" id="3.90.1150.10">
    <property type="entry name" value="Aspartate Aminotransferase, domain 1"/>
    <property type="match status" value="1"/>
</dbReference>
<dbReference type="Gene3D" id="3.40.640.10">
    <property type="entry name" value="Type I PLP-dependent aspartate aminotransferase-like (Major domain)"/>
    <property type="match status" value="1"/>
</dbReference>
<dbReference type="HAMAP" id="MF_00713">
    <property type="entry name" value="GcvPB"/>
    <property type="match status" value="1"/>
</dbReference>
<dbReference type="InterPro" id="IPR023012">
    <property type="entry name" value="GcvPB"/>
</dbReference>
<dbReference type="InterPro" id="IPR049316">
    <property type="entry name" value="GDC-P_C"/>
</dbReference>
<dbReference type="InterPro" id="IPR049315">
    <property type="entry name" value="GDC-P_N"/>
</dbReference>
<dbReference type="InterPro" id="IPR020581">
    <property type="entry name" value="GDC_P"/>
</dbReference>
<dbReference type="InterPro" id="IPR015424">
    <property type="entry name" value="PyrdxlP-dep_Trfase"/>
</dbReference>
<dbReference type="InterPro" id="IPR015421">
    <property type="entry name" value="PyrdxlP-dep_Trfase_major"/>
</dbReference>
<dbReference type="InterPro" id="IPR015422">
    <property type="entry name" value="PyrdxlP-dep_Trfase_small"/>
</dbReference>
<dbReference type="NCBIfam" id="NF003346">
    <property type="entry name" value="PRK04366.1"/>
    <property type="match status" value="1"/>
</dbReference>
<dbReference type="PANTHER" id="PTHR11773:SF1">
    <property type="entry name" value="GLYCINE DEHYDROGENASE (DECARBOXYLATING), MITOCHONDRIAL"/>
    <property type="match status" value="1"/>
</dbReference>
<dbReference type="PANTHER" id="PTHR11773">
    <property type="entry name" value="GLYCINE DEHYDROGENASE, DECARBOXYLATING"/>
    <property type="match status" value="1"/>
</dbReference>
<dbReference type="Pfam" id="PF21478">
    <property type="entry name" value="GcvP2_C"/>
    <property type="match status" value="1"/>
</dbReference>
<dbReference type="Pfam" id="PF02347">
    <property type="entry name" value="GDC-P"/>
    <property type="match status" value="1"/>
</dbReference>
<dbReference type="SUPFAM" id="SSF53383">
    <property type="entry name" value="PLP-dependent transferases"/>
    <property type="match status" value="1"/>
</dbReference>
<sequence length="502" mass="55933">MFRQAKWDEPLIFELSRSGRVGYTLPKPIEDVEIRVPEKLKRKSPLNLPELSEPEVVKHYTRLSGMNYGVDSGIYPLGSCTMKYNPKINEEIAGHPGVAYVHPYQDERTIQGALKIMWELEGWLKEITGMDRFTLQPAAGANGEFTGVMIIRAYHLDRGETQRTEMLVPDSAHGTNPASAAMAGFKVIEIPSNENGTVDLEALENAVSERTAGLMLTNPNTLGIFEDEILEIAKIVHKAGGLLYYDGANLNAVLGKIRPGDMGFDIVHLNLHKTFSTPHGGGGPGSGPVGVKDFLKDYLPVPLVGYDEESGRYYLDYNVPKSIGKVKELYGNFAVMVRALTYLKIMGRDGLKEASEIAVLNANYLTQKLKGTRGYELPHKELRKHEVVFSAEPMKKETGVKALDVAKRLLDFGLHAPTIYFPLIVHEALMIEPTETVSREELDAYVEALKRISEEAYSNPELVKSAPHNTAVKRVDDVLAAKRPIITWRMYRELKEKGEVDI</sequence>
<protein>
    <recommendedName>
        <fullName evidence="1">Probable glycine dehydrogenase (decarboxylating) subunit 2</fullName>
        <ecNumber evidence="1">1.4.4.2</ecNumber>
    </recommendedName>
    <alternativeName>
        <fullName evidence="1">Glycine cleavage system P-protein subunit 2</fullName>
    </alternativeName>
    <alternativeName>
        <fullName evidence="1">Glycine decarboxylase subunit 2</fullName>
    </alternativeName>
    <alternativeName>
        <fullName evidence="1">Glycine dehydrogenase (aminomethyl-transferring) subunit 2</fullName>
    </alternativeName>
</protein>